<proteinExistence type="evidence at transcript level"/>
<dbReference type="EMBL" id="AY112741">
    <property type="protein sequence ID" value="AAM56033.1"/>
    <property type="molecule type" value="mRNA"/>
</dbReference>
<dbReference type="EMBL" id="AB076564">
    <property type="protein sequence ID" value="BAC53759.1"/>
    <property type="molecule type" value="mRNA"/>
</dbReference>
<dbReference type="RefSeq" id="NP_733767.1">
    <property type="nucleotide sequence ID" value="NM_170667.2"/>
</dbReference>
<dbReference type="SMR" id="Q8BFS3"/>
<dbReference type="FunCoup" id="Q8BFS3">
    <property type="interactions" value="31"/>
</dbReference>
<dbReference type="STRING" id="10116.ENSRNOP00000007775"/>
<dbReference type="PhosphoSitePlus" id="Q8BFS3"/>
<dbReference type="PaxDb" id="10116-ENSRNOP00000007775"/>
<dbReference type="Ensembl" id="ENSRNOT00000007775.5">
    <property type="protein sequence ID" value="ENSRNOP00000007775.1"/>
    <property type="gene ID" value="ENSRNOG00000005911.5"/>
</dbReference>
<dbReference type="GeneID" id="266997"/>
<dbReference type="KEGG" id="rno:266997"/>
<dbReference type="AGR" id="RGD:628745"/>
<dbReference type="CTD" id="117579"/>
<dbReference type="RGD" id="628745">
    <property type="gene designation" value="Rln3"/>
</dbReference>
<dbReference type="eggNOG" id="ENOG502S2C4">
    <property type="taxonomic scope" value="Eukaryota"/>
</dbReference>
<dbReference type="GeneTree" id="ENSGT00940000154396"/>
<dbReference type="HOGENOM" id="CLU_120043_0_0_1"/>
<dbReference type="InParanoid" id="Q8BFS3"/>
<dbReference type="OMA" id="WGCSKRE"/>
<dbReference type="OrthoDB" id="9443437at2759"/>
<dbReference type="PhylomeDB" id="Q8BFS3"/>
<dbReference type="TreeFam" id="TF333404"/>
<dbReference type="Reactome" id="R-RNO-418594">
    <property type="pathway name" value="G alpha (i) signalling events"/>
</dbReference>
<dbReference type="Reactome" id="R-RNO-444821">
    <property type="pathway name" value="Relaxin receptors"/>
</dbReference>
<dbReference type="PRO" id="PR:Q8BFS3"/>
<dbReference type="Proteomes" id="UP000002494">
    <property type="component" value="Chromosome 19"/>
</dbReference>
<dbReference type="Bgee" id="ENSRNOG00000005911">
    <property type="expression patterns" value="Expressed in thymus and 9 other cell types or tissues"/>
</dbReference>
<dbReference type="GO" id="GO:0005576">
    <property type="term" value="C:extracellular region"/>
    <property type="evidence" value="ECO:0007669"/>
    <property type="project" value="UniProtKB-SubCell"/>
</dbReference>
<dbReference type="GO" id="GO:0001664">
    <property type="term" value="F:G protein-coupled receptor binding"/>
    <property type="evidence" value="ECO:0000315"/>
    <property type="project" value="RGD"/>
</dbReference>
<dbReference type="GO" id="GO:0005179">
    <property type="term" value="F:hormone activity"/>
    <property type="evidence" value="ECO:0000304"/>
    <property type="project" value="RGD"/>
</dbReference>
<dbReference type="CDD" id="cd04365">
    <property type="entry name" value="IlGF_relaxin_like"/>
    <property type="match status" value="1"/>
</dbReference>
<dbReference type="InterPro" id="IPR016179">
    <property type="entry name" value="Insulin-like"/>
</dbReference>
<dbReference type="InterPro" id="IPR051777">
    <property type="entry name" value="Insulin-like_neuro_ligands"/>
</dbReference>
<dbReference type="InterPro" id="IPR036438">
    <property type="entry name" value="Insulin-like_sf"/>
</dbReference>
<dbReference type="InterPro" id="IPR022353">
    <property type="entry name" value="Insulin_CS"/>
</dbReference>
<dbReference type="InterPro" id="IPR022352">
    <property type="entry name" value="Insulin_family"/>
</dbReference>
<dbReference type="PANTHER" id="PTHR20968">
    <property type="entry name" value="ILGF DOMAIN-CONTAINING PROTEIN"/>
    <property type="match status" value="1"/>
</dbReference>
<dbReference type="PANTHER" id="PTHR20968:SF0">
    <property type="entry name" value="RELAXIN-3"/>
    <property type="match status" value="1"/>
</dbReference>
<dbReference type="Pfam" id="PF00049">
    <property type="entry name" value="Insulin"/>
    <property type="match status" value="1"/>
</dbReference>
<dbReference type="PRINTS" id="PR00276">
    <property type="entry name" value="INSULINFAMLY"/>
</dbReference>
<dbReference type="SMART" id="SM00078">
    <property type="entry name" value="IlGF"/>
    <property type="match status" value="1"/>
</dbReference>
<dbReference type="SUPFAM" id="SSF56994">
    <property type="entry name" value="Insulin-like"/>
    <property type="match status" value="1"/>
</dbReference>
<dbReference type="PROSITE" id="PS00262">
    <property type="entry name" value="INSULIN"/>
    <property type="match status" value="1"/>
</dbReference>
<feature type="signal peptide" evidence="1">
    <location>
        <begin position="1"/>
        <end position="23"/>
    </location>
</feature>
<feature type="peptide" id="PRO_0000016094" description="Relaxin-3 B chain" evidence="1">
    <location>
        <begin position="24"/>
        <end position="50"/>
    </location>
</feature>
<feature type="propeptide" id="PRO_0000016095" description="Connecting peptide" evidence="1">
    <location>
        <begin position="53"/>
        <end position="116"/>
    </location>
</feature>
<feature type="peptide" id="PRO_0000016096" description="Relaxin-3 A chain" evidence="1">
    <location>
        <begin position="117"/>
        <end position="140"/>
    </location>
</feature>
<feature type="disulfide bond" description="Interchain (between B and A chains)" evidence="1">
    <location>
        <begin position="33"/>
        <end position="127"/>
    </location>
</feature>
<feature type="disulfide bond" description="Interchain (between B and A chains)" evidence="1">
    <location>
        <begin position="45"/>
        <end position="140"/>
    </location>
</feature>
<feature type="disulfide bond" evidence="1">
    <location>
        <begin position="126"/>
        <end position="131"/>
    </location>
</feature>
<comment type="function">
    <text evidence="1">May play a role in neuropeptide signaling processes. Ligand for LGR7, relaxin-3 receptor-1 and relaxin-3 receptor-2 (By similarity).</text>
</comment>
<comment type="subunit">
    <text>Heterodimer of a B chain and an A chain linked by two disulfide bonds.</text>
</comment>
<comment type="subcellular location">
    <subcellularLocation>
        <location>Secreted</location>
    </subcellularLocation>
</comment>
<comment type="tissue specificity">
    <text evidence="2">Highly abundant expression is detected in neurons within the ventomedial dorsal tegmental nucleus and the laterally central gray alpha of the pons. Also detected at much lower levels within the hippocampus.</text>
</comment>
<comment type="similarity">
    <text evidence="3">Belongs to the insulin family.</text>
</comment>
<evidence type="ECO:0000250" key="1"/>
<evidence type="ECO:0000269" key="2">
    <source>
    </source>
</evidence>
<evidence type="ECO:0000305" key="3"/>
<sequence>MATRGLLLASWALLGALVLQAEARPAPYGVKLCGREFIRAVIFTCGGSRWRRADILAHDPLGEFFADGEANTDHLASELDEAVGSSEWLALTKSPQVFYGGRSSWQGSPGVVRGSRDVLAGLSSSCCEWGCSKSQISSLC</sequence>
<protein>
    <recommendedName>
        <fullName>Relaxin-3</fullName>
    </recommendedName>
    <alternativeName>
        <fullName>Insulin-like peptide INSL7</fullName>
        <shortName>Insulin-like peptide 7</shortName>
    </alternativeName>
    <alternativeName>
        <fullName>Prorelaxin R3</fullName>
    </alternativeName>
    <component>
        <recommendedName>
            <fullName>Relaxin-3 B chain</fullName>
        </recommendedName>
    </component>
    <component>
        <recommendedName>
            <fullName>Relaxin-3 A chain</fullName>
        </recommendedName>
    </component>
</protein>
<keyword id="KW-0165">Cleavage on pair of basic residues</keyword>
<keyword id="KW-1015">Disulfide bond</keyword>
<keyword id="KW-0372">Hormone</keyword>
<keyword id="KW-1185">Reference proteome</keyword>
<keyword id="KW-0964">Secreted</keyword>
<keyword id="KW-0732">Signal</keyword>
<organism>
    <name type="scientific">Rattus norvegicus</name>
    <name type="common">Rat</name>
    <dbReference type="NCBI Taxonomy" id="10116"/>
    <lineage>
        <taxon>Eukaryota</taxon>
        <taxon>Metazoa</taxon>
        <taxon>Chordata</taxon>
        <taxon>Craniata</taxon>
        <taxon>Vertebrata</taxon>
        <taxon>Euteleostomi</taxon>
        <taxon>Mammalia</taxon>
        <taxon>Eutheria</taxon>
        <taxon>Euarchontoglires</taxon>
        <taxon>Glires</taxon>
        <taxon>Rodentia</taxon>
        <taxon>Myomorpha</taxon>
        <taxon>Muroidea</taxon>
        <taxon>Muridae</taxon>
        <taxon>Murinae</taxon>
        <taxon>Rattus</taxon>
    </lineage>
</organism>
<accession>Q8BFS3</accession>
<reference key="1">
    <citation type="journal article" date="2002" name="J. Neurochem.">
        <title>Restricted, but abundant, expression of the novel rat gene-3 (R3) relaxin in the dorsal tegmental region of brain.</title>
        <authorList>
            <person name="Burazin T.C.D."/>
            <person name="Bathgate R.A.D."/>
            <person name="Macris M."/>
            <person name="Layfield S."/>
            <person name="Gundlach A.L."/>
            <person name="Tregear G.W."/>
        </authorList>
    </citation>
    <scope>NUCLEOTIDE SEQUENCE [MRNA]</scope>
    <scope>TISSUE SPECIFICITY</scope>
    <source>
        <strain>Sprague-Dawley</strain>
        <tissue>Brain</tissue>
    </source>
</reference>
<reference key="2">
    <citation type="journal article" date="2003" name="Regul. Pept.">
        <title>Production of recombinant human relaxin 3 in AtT20 cells.</title>
        <authorList>
            <person name="Kizawa H."/>
            <person name="Nishi K."/>
            <person name="Ishibashi Y."/>
            <person name="Harada M."/>
            <person name="Asano T."/>
            <person name="Ito Y."/>
            <person name="Suzuki N."/>
            <person name="Hinuma S."/>
            <person name="Fujisawa Y."/>
            <person name="Onda H."/>
            <person name="Nishimura O."/>
            <person name="Fujino M."/>
        </authorList>
    </citation>
    <scope>NUCLEOTIDE SEQUENCE [MRNA]</scope>
</reference>
<gene>
    <name type="primary">Rln3</name>
    <name type="synonym">Insl7</name>
</gene>
<name>REL3_RAT</name>